<reference key="1">
    <citation type="submission" date="2008-02" db="EMBL/GenBank/DDBJ databases">
        <title>Genome sequence of Ureaplasma parvum serovar 3.</title>
        <authorList>
            <person name="Methe B.A."/>
            <person name="Glass J."/>
            <person name="Waites K."/>
            <person name="Shrivastava S."/>
        </authorList>
    </citation>
    <scope>NUCLEOTIDE SEQUENCE [LARGE SCALE GENOMIC DNA]</scope>
    <source>
        <strain>ATCC 27815 / 27 / NCTC 11736</strain>
    </source>
</reference>
<protein>
    <recommendedName>
        <fullName evidence="1">tRNA modification GTPase MnmE</fullName>
        <ecNumber evidence="1">3.6.-.-</ecNumber>
    </recommendedName>
</protein>
<keyword id="KW-0963">Cytoplasm</keyword>
<keyword id="KW-0342">GTP-binding</keyword>
<keyword id="KW-0378">Hydrolase</keyword>
<keyword id="KW-0460">Magnesium</keyword>
<keyword id="KW-0479">Metal-binding</keyword>
<keyword id="KW-0547">Nucleotide-binding</keyword>
<keyword id="KW-0630">Potassium</keyword>
<keyword id="KW-0819">tRNA processing</keyword>
<name>MNME_UREP2</name>
<proteinExistence type="inferred from homology"/>
<evidence type="ECO:0000255" key="1">
    <source>
        <dbReference type="HAMAP-Rule" id="MF_00379"/>
    </source>
</evidence>
<dbReference type="EC" id="3.6.-.-" evidence="1"/>
<dbReference type="EMBL" id="CP000942">
    <property type="protein sequence ID" value="ACA33022.1"/>
    <property type="molecule type" value="Genomic_DNA"/>
</dbReference>
<dbReference type="RefSeq" id="WP_006688774.1">
    <property type="nucleotide sequence ID" value="NC_010503.1"/>
</dbReference>
<dbReference type="SMR" id="B1AI04"/>
<dbReference type="GeneID" id="29672324"/>
<dbReference type="KEGG" id="upa:UPA3_0018"/>
<dbReference type="HOGENOM" id="CLU_019624_4_1_14"/>
<dbReference type="Proteomes" id="UP000002162">
    <property type="component" value="Chromosome"/>
</dbReference>
<dbReference type="GO" id="GO:0005829">
    <property type="term" value="C:cytosol"/>
    <property type="evidence" value="ECO:0007669"/>
    <property type="project" value="TreeGrafter"/>
</dbReference>
<dbReference type="GO" id="GO:0005525">
    <property type="term" value="F:GTP binding"/>
    <property type="evidence" value="ECO:0007669"/>
    <property type="project" value="UniProtKB-UniRule"/>
</dbReference>
<dbReference type="GO" id="GO:0003924">
    <property type="term" value="F:GTPase activity"/>
    <property type="evidence" value="ECO:0007669"/>
    <property type="project" value="UniProtKB-UniRule"/>
</dbReference>
<dbReference type="GO" id="GO:0046872">
    <property type="term" value="F:metal ion binding"/>
    <property type="evidence" value="ECO:0007669"/>
    <property type="project" value="UniProtKB-KW"/>
</dbReference>
<dbReference type="GO" id="GO:0030488">
    <property type="term" value="P:tRNA methylation"/>
    <property type="evidence" value="ECO:0007669"/>
    <property type="project" value="TreeGrafter"/>
</dbReference>
<dbReference type="GO" id="GO:0002098">
    <property type="term" value="P:tRNA wobble uridine modification"/>
    <property type="evidence" value="ECO:0007669"/>
    <property type="project" value="TreeGrafter"/>
</dbReference>
<dbReference type="CDD" id="cd04164">
    <property type="entry name" value="trmE"/>
    <property type="match status" value="1"/>
</dbReference>
<dbReference type="CDD" id="cd14858">
    <property type="entry name" value="TrmE_N"/>
    <property type="match status" value="1"/>
</dbReference>
<dbReference type="Gene3D" id="3.40.50.300">
    <property type="entry name" value="P-loop containing nucleotide triphosphate hydrolases"/>
    <property type="match status" value="1"/>
</dbReference>
<dbReference type="Gene3D" id="3.30.1360.120">
    <property type="entry name" value="Probable tRNA modification gtpase trme, domain 1"/>
    <property type="match status" value="1"/>
</dbReference>
<dbReference type="Gene3D" id="1.20.120.430">
    <property type="entry name" value="tRNA modification GTPase MnmE domain 2"/>
    <property type="match status" value="1"/>
</dbReference>
<dbReference type="HAMAP" id="MF_00379">
    <property type="entry name" value="GTPase_MnmE"/>
    <property type="match status" value="1"/>
</dbReference>
<dbReference type="InterPro" id="IPR031168">
    <property type="entry name" value="G_TrmE"/>
</dbReference>
<dbReference type="InterPro" id="IPR006073">
    <property type="entry name" value="GTP-bd"/>
</dbReference>
<dbReference type="InterPro" id="IPR018948">
    <property type="entry name" value="GTP-bd_TrmE_N"/>
</dbReference>
<dbReference type="InterPro" id="IPR004520">
    <property type="entry name" value="GTPase_MnmE"/>
</dbReference>
<dbReference type="InterPro" id="IPR027368">
    <property type="entry name" value="MnmE_dom2"/>
</dbReference>
<dbReference type="InterPro" id="IPR025867">
    <property type="entry name" value="MnmE_helical"/>
</dbReference>
<dbReference type="InterPro" id="IPR027417">
    <property type="entry name" value="P-loop_NTPase"/>
</dbReference>
<dbReference type="InterPro" id="IPR005225">
    <property type="entry name" value="Small_GTP-bd"/>
</dbReference>
<dbReference type="InterPro" id="IPR027266">
    <property type="entry name" value="TrmE/GcvT_dom1"/>
</dbReference>
<dbReference type="NCBIfam" id="TIGR00450">
    <property type="entry name" value="mnmE_trmE_thdF"/>
    <property type="match status" value="1"/>
</dbReference>
<dbReference type="NCBIfam" id="TIGR00231">
    <property type="entry name" value="small_GTP"/>
    <property type="match status" value="1"/>
</dbReference>
<dbReference type="PANTHER" id="PTHR42714">
    <property type="entry name" value="TRNA MODIFICATION GTPASE GTPBP3"/>
    <property type="match status" value="1"/>
</dbReference>
<dbReference type="PANTHER" id="PTHR42714:SF2">
    <property type="entry name" value="TRNA MODIFICATION GTPASE GTPBP3, MITOCHONDRIAL"/>
    <property type="match status" value="1"/>
</dbReference>
<dbReference type="Pfam" id="PF01926">
    <property type="entry name" value="MMR_HSR1"/>
    <property type="match status" value="1"/>
</dbReference>
<dbReference type="Pfam" id="PF12631">
    <property type="entry name" value="MnmE_helical"/>
    <property type="match status" value="1"/>
</dbReference>
<dbReference type="Pfam" id="PF10396">
    <property type="entry name" value="TrmE_N"/>
    <property type="match status" value="1"/>
</dbReference>
<dbReference type="SUPFAM" id="SSF52540">
    <property type="entry name" value="P-loop containing nucleoside triphosphate hydrolases"/>
    <property type="match status" value="1"/>
</dbReference>
<dbReference type="PROSITE" id="PS51709">
    <property type="entry name" value="G_TRME"/>
    <property type="match status" value="1"/>
</dbReference>
<comment type="function">
    <text evidence="1">Exhibits a very high intrinsic GTPase hydrolysis rate. Involved in the addition of a carboxymethylaminomethyl (cmnm) group at the wobble position (U34) of certain tRNAs, forming tRNA-cmnm(5)s(2)U34.</text>
</comment>
<comment type="cofactor">
    <cofactor evidence="1">
        <name>K(+)</name>
        <dbReference type="ChEBI" id="CHEBI:29103"/>
    </cofactor>
    <text evidence="1">Binds 1 potassium ion per subunit.</text>
</comment>
<comment type="subunit">
    <text evidence="1">Homodimer. Heterotetramer of two MnmE and two MnmG subunits.</text>
</comment>
<comment type="subcellular location">
    <subcellularLocation>
        <location evidence="1">Cytoplasm</location>
    </subcellularLocation>
</comment>
<comment type="similarity">
    <text evidence="1">Belongs to the TRAFAC class TrmE-Era-EngA-EngB-Septin-like GTPase superfamily. TrmE GTPase family.</text>
</comment>
<accession>B1AI04</accession>
<gene>
    <name evidence="1" type="primary">mnmE</name>
    <name evidence="1" type="synonym">trmE</name>
    <name type="ordered locus">UPA3_0018</name>
</gene>
<organism>
    <name type="scientific">Ureaplasma parvum serovar 3 (strain ATCC 27815 / 27 / NCTC 11736)</name>
    <dbReference type="NCBI Taxonomy" id="505682"/>
    <lineage>
        <taxon>Bacteria</taxon>
        <taxon>Bacillati</taxon>
        <taxon>Mycoplasmatota</taxon>
        <taxon>Mycoplasmoidales</taxon>
        <taxon>Mycoplasmoidaceae</taxon>
        <taxon>Ureaplasma</taxon>
    </lineage>
</organism>
<sequence length="438" mass="49464">MSTIVALATAPMNCAIHIIRVSGPKAFEIINKISTIKIKKETFKIWYTILKDDNQILDEVLINTFVAPKTFTGEDLVEINCHGGIVVANLIIKTLIKYGCQPAQRGEFSRRALLNKKMDLSKIEAINNLVNAKNELSVKGVIGALLGRVSQSIAEFRHELFMIIGQIEVNIDYPEYDDVEQVDAIILKQRLLSLDKKITKIIDQSKKFLPINKGIRVLIIGKPNVGKSTLLNALCNEQKAIVTDIPGTTRDVIESSINIDNITLNILDTAGIHLTNDFVENLGINKAKALIDKVDLILYLIPANEQQDLELYDLIKKQKHLLVYTKKDLVDQYDDKQIYINAKNNDIQSLIDEIKKLFYVQEFDNANIDVLQSQRQIGILENVHYLINNAILNLEKGDTLDLIVADLEFCNLRLNELLGISSEYDFLDDLFKNFCIGK</sequence>
<feature type="chain" id="PRO_1000080021" description="tRNA modification GTPase MnmE">
    <location>
        <begin position="1"/>
        <end position="438"/>
    </location>
</feature>
<feature type="domain" description="TrmE-type G">
    <location>
        <begin position="214"/>
        <end position="359"/>
    </location>
</feature>
<feature type="binding site" evidence="1">
    <location>
        <position position="20"/>
    </location>
    <ligand>
        <name>(6S)-5-formyl-5,6,7,8-tetrahydrofolate</name>
        <dbReference type="ChEBI" id="CHEBI:57457"/>
    </ligand>
</feature>
<feature type="binding site" evidence="1">
    <location>
        <position position="78"/>
    </location>
    <ligand>
        <name>(6S)-5-formyl-5,6,7,8-tetrahydrofolate</name>
        <dbReference type="ChEBI" id="CHEBI:57457"/>
    </ligand>
</feature>
<feature type="binding site" evidence="1">
    <location>
        <position position="117"/>
    </location>
    <ligand>
        <name>(6S)-5-formyl-5,6,7,8-tetrahydrofolate</name>
        <dbReference type="ChEBI" id="CHEBI:57457"/>
    </ligand>
</feature>
<feature type="binding site" evidence="1">
    <location>
        <begin position="224"/>
        <end position="229"/>
    </location>
    <ligand>
        <name>GTP</name>
        <dbReference type="ChEBI" id="CHEBI:37565"/>
    </ligand>
</feature>
<feature type="binding site" evidence="1">
    <location>
        <position position="224"/>
    </location>
    <ligand>
        <name>K(+)</name>
        <dbReference type="ChEBI" id="CHEBI:29103"/>
    </ligand>
</feature>
<feature type="binding site" evidence="1">
    <location>
        <position position="228"/>
    </location>
    <ligand>
        <name>Mg(2+)</name>
        <dbReference type="ChEBI" id="CHEBI:18420"/>
    </ligand>
</feature>
<feature type="binding site" evidence="1">
    <location>
        <begin position="243"/>
        <end position="249"/>
    </location>
    <ligand>
        <name>GTP</name>
        <dbReference type="ChEBI" id="CHEBI:37565"/>
    </ligand>
</feature>
<feature type="binding site" evidence="1">
    <location>
        <position position="243"/>
    </location>
    <ligand>
        <name>K(+)</name>
        <dbReference type="ChEBI" id="CHEBI:29103"/>
    </ligand>
</feature>
<feature type="binding site" evidence="1">
    <location>
        <position position="245"/>
    </location>
    <ligand>
        <name>K(+)</name>
        <dbReference type="ChEBI" id="CHEBI:29103"/>
    </ligand>
</feature>
<feature type="binding site" evidence="1">
    <location>
        <position position="248"/>
    </location>
    <ligand>
        <name>K(+)</name>
        <dbReference type="ChEBI" id="CHEBI:29103"/>
    </ligand>
</feature>
<feature type="binding site" evidence="1">
    <location>
        <position position="249"/>
    </location>
    <ligand>
        <name>Mg(2+)</name>
        <dbReference type="ChEBI" id="CHEBI:18420"/>
    </ligand>
</feature>
<feature type="binding site" evidence="1">
    <location>
        <begin position="268"/>
        <end position="271"/>
    </location>
    <ligand>
        <name>GTP</name>
        <dbReference type="ChEBI" id="CHEBI:37565"/>
    </ligand>
</feature>
<feature type="binding site" evidence="1">
    <location>
        <position position="438"/>
    </location>
    <ligand>
        <name>(6S)-5-formyl-5,6,7,8-tetrahydrofolate</name>
        <dbReference type="ChEBI" id="CHEBI:57457"/>
    </ligand>
</feature>